<name>HOA1_MYCVP</name>
<dbReference type="EC" id="4.1.3.39" evidence="1"/>
<dbReference type="EMBL" id="CP000511">
    <property type="protein sequence ID" value="ABM11436.1"/>
    <property type="molecule type" value="Genomic_DNA"/>
</dbReference>
<dbReference type="RefSeq" id="WP_011777873.1">
    <property type="nucleotide sequence ID" value="NC_008726.1"/>
</dbReference>
<dbReference type="SMR" id="A1T2N6"/>
<dbReference type="STRING" id="350058.Mvan_0597"/>
<dbReference type="KEGG" id="mva:Mvan_0597"/>
<dbReference type="eggNOG" id="COG0119">
    <property type="taxonomic scope" value="Bacteria"/>
</dbReference>
<dbReference type="HOGENOM" id="CLU_049173_0_0_11"/>
<dbReference type="Proteomes" id="UP000009159">
    <property type="component" value="Chromosome"/>
</dbReference>
<dbReference type="GO" id="GO:0003852">
    <property type="term" value="F:2-isopropylmalate synthase activity"/>
    <property type="evidence" value="ECO:0007669"/>
    <property type="project" value="TreeGrafter"/>
</dbReference>
<dbReference type="GO" id="GO:0008701">
    <property type="term" value="F:4-hydroxy-2-oxovalerate aldolase activity"/>
    <property type="evidence" value="ECO:0007669"/>
    <property type="project" value="UniProtKB-UniRule"/>
</dbReference>
<dbReference type="GO" id="GO:0030145">
    <property type="term" value="F:manganese ion binding"/>
    <property type="evidence" value="ECO:0007669"/>
    <property type="project" value="UniProtKB-UniRule"/>
</dbReference>
<dbReference type="GO" id="GO:0009056">
    <property type="term" value="P:catabolic process"/>
    <property type="evidence" value="ECO:0007669"/>
    <property type="project" value="UniProtKB-KW"/>
</dbReference>
<dbReference type="GO" id="GO:0009098">
    <property type="term" value="P:L-leucine biosynthetic process"/>
    <property type="evidence" value="ECO:0007669"/>
    <property type="project" value="TreeGrafter"/>
</dbReference>
<dbReference type="CDD" id="cd07943">
    <property type="entry name" value="DRE_TIM_HOA"/>
    <property type="match status" value="1"/>
</dbReference>
<dbReference type="Gene3D" id="1.10.8.60">
    <property type="match status" value="1"/>
</dbReference>
<dbReference type="Gene3D" id="3.20.20.70">
    <property type="entry name" value="Aldolase class I"/>
    <property type="match status" value="1"/>
</dbReference>
<dbReference type="HAMAP" id="MF_01656">
    <property type="entry name" value="HOA"/>
    <property type="match status" value="1"/>
</dbReference>
<dbReference type="InterPro" id="IPR050073">
    <property type="entry name" value="2-IPM_HCS-like"/>
</dbReference>
<dbReference type="InterPro" id="IPR017629">
    <property type="entry name" value="4OH_2_O-val_aldolase"/>
</dbReference>
<dbReference type="InterPro" id="IPR013785">
    <property type="entry name" value="Aldolase_TIM"/>
</dbReference>
<dbReference type="InterPro" id="IPR012425">
    <property type="entry name" value="DmpG_comm"/>
</dbReference>
<dbReference type="InterPro" id="IPR035685">
    <property type="entry name" value="DRE_TIM_HOA"/>
</dbReference>
<dbReference type="InterPro" id="IPR000891">
    <property type="entry name" value="PYR_CT"/>
</dbReference>
<dbReference type="NCBIfam" id="TIGR03217">
    <property type="entry name" value="4OH_2_O_val_ald"/>
    <property type="match status" value="1"/>
</dbReference>
<dbReference type="NCBIfam" id="NF006049">
    <property type="entry name" value="PRK08195.1"/>
    <property type="match status" value="1"/>
</dbReference>
<dbReference type="PANTHER" id="PTHR10277:SF9">
    <property type="entry name" value="2-ISOPROPYLMALATE SYNTHASE 1, CHLOROPLASTIC-RELATED"/>
    <property type="match status" value="1"/>
</dbReference>
<dbReference type="PANTHER" id="PTHR10277">
    <property type="entry name" value="HOMOCITRATE SYNTHASE-RELATED"/>
    <property type="match status" value="1"/>
</dbReference>
<dbReference type="Pfam" id="PF07836">
    <property type="entry name" value="DmpG_comm"/>
    <property type="match status" value="1"/>
</dbReference>
<dbReference type="Pfam" id="PF00682">
    <property type="entry name" value="HMGL-like"/>
    <property type="match status" value="1"/>
</dbReference>
<dbReference type="SUPFAM" id="SSF51569">
    <property type="entry name" value="Aldolase"/>
    <property type="match status" value="1"/>
</dbReference>
<dbReference type="SUPFAM" id="SSF89000">
    <property type="entry name" value="post-HMGL domain-like"/>
    <property type="match status" value="1"/>
</dbReference>
<dbReference type="PROSITE" id="PS50991">
    <property type="entry name" value="PYR_CT"/>
    <property type="match status" value="1"/>
</dbReference>
<feature type="chain" id="PRO_0000387866" description="4-hydroxy-2-oxovalerate aldolase 1">
    <location>
        <begin position="1"/>
        <end position="338"/>
    </location>
</feature>
<feature type="domain" description="Pyruvate carboxyltransferase" evidence="1">
    <location>
        <begin position="5"/>
        <end position="257"/>
    </location>
</feature>
<feature type="active site" description="Proton acceptor" evidence="1">
    <location>
        <position position="17"/>
    </location>
</feature>
<feature type="binding site" evidence="1">
    <location>
        <begin position="13"/>
        <end position="14"/>
    </location>
    <ligand>
        <name>substrate</name>
    </ligand>
</feature>
<feature type="binding site" evidence="1">
    <location>
        <position position="14"/>
    </location>
    <ligand>
        <name>Mn(2+)</name>
        <dbReference type="ChEBI" id="CHEBI:29035"/>
    </ligand>
</feature>
<feature type="binding site" evidence="1">
    <location>
        <position position="167"/>
    </location>
    <ligand>
        <name>substrate</name>
    </ligand>
</feature>
<feature type="binding site" evidence="1">
    <location>
        <position position="196"/>
    </location>
    <ligand>
        <name>Mn(2+)</name>
        <dbReference type="ChEBI" id="CHEBI:29035"/>
    </ligand>
</feature>
<feature type="binding site" evidence="1">
    <location>
        <position position="196"/>
    </location>
    <ligand>
        <name>substrate</name>
    </ligand>
</feature>
<feature type="binding site" evidence="1">
    <location>
        <position position="198"/>
    </location>
    <ligand>
        <name>Mn(2+)</name>
        <dbReference type="ChEBI" id="CHEBI:29035"/>
    </ligand>
</feature>
<feature type="binding site" evidence="1">
    <location>
        <position position="287"/>
    </location>
    <ligand>
        <name>substrate</name>
    </ligand>
</feature>
<feature type="site" description="Transition state stabilizer" evidence="1">
    <location>
        <position position="13"/>
    </location>
</feature>
<gene>
    <name type="ordered locus">Mvan_0597</name>
</gene>
<accession>A1T2N6</accession>
<proteinExistence type="inferred from homology"/>
<organism>
    <name type="scientific">Mycolicibacterium vanbaalenii (strain DSM 7251 / JCM 13017 / BCRC 16820 / KCTC 9966 / NRRL B-24157 / PYR-1)</name>
    <name type="common">Mycobacterium vanbaalenii</name>
    <dbReference type="NCBI Taxonomy" id="350058"/>
    <lineage>
        <taxon>Bacteria</taxon>
        <taxon>Bacillati</taxon>
        <taxon>Actinomycetota</taxon>
        <taxon>Actinomycetes</taxon>
        <taxon>Mycobacteriales</taxon>
        <taxon>Mycobacteriaceae</taxon>
        <taxon>Mycolicibacterium</taxon>
    </lineage>
</organism>
<protein>
    <recommendedName>
        <fullName evidence="1">4-hydroxy-2-oxovalerate aldolase 1</fullName>
        <shortName evidence="1">HOA 1</shortName>
        <ecNumber evidence="1">4.1.3.39</ecNumber>
    </recommendedName>
    <alternativeName>
        <fullName evidence="1">4-hydroxy-2-keto-pentanoic acid aldolase 1</fullName>
    </alternativeName>
    <alternativeName>
        <fullName evidence="1">4-hydroxy-2-oxopentanoate aldolase 1</fullName>
    </alternativeName>
</protein>
<keyword id="KW-0058">Aromatic hydrocarbons catabolism</keyword>
<keyword id="KW-0456">Lyase</keyword>
<keyword id="KW-0464">Manganese</keyword>
<keyword id="KW-0479">Metal-binding</keyword>
<evidence type="ECO:0000255" key="1">
    <source>
        <dbReference type="HAMAP-Rule" id="MF_01656"/>
    </source>
</evidence>
<comment type="catalytic activity">
    <reaction evidence="1">
        <text>(S)-4-hydroxy-2-oxopentanoate = acetaldehyde + pyruvate</text>
        <dbReference type="Rhea" id="RHEA:22624"/>
        <dbReference type="ChEBI" id="CHEBI:15343"/>
        <dbReference type="ChEBI" id="CHEBI:15361"/>
        <dbReference type="ChEBI" id="CHEBI:73143"/>
        <dbReference type="EC" id="4.1.3.39"/>
    </reaction>
</comment>
<comment type="similarity">
    <text evidence="1">Belongs to the 4-hydroxy-2-oxovalerate aldolase family.</text>
</comment>
<reference key="1">
    <citation type="submission" date="2006-12" db="EMBL/GenBank/DDBJ databases">
        <title>Complete sequence of Mycobacterium vanbaalenii PYR-1.</title>
        <authorList>
            <consortium name="US DOE Joint Genome Institute"/>
            <person name="Copeland A."/>
            <person name="Lucas S."/>
            <person name="Lapidus A."/>
            <person name="Barry K."/>
            <person name="Detter J.C."/>
            <person name="Glavina del Rio T."/>
            <person name="Hammon N."/>
            <person name="Israni S."/>
            <person name="Dalin E."/>
            <person name="Tice H."/>
            <person name="Pitluck S."/>
            <person name="Singan V."/>
            <person name="Schmutz J."/>
            <person name="Larimer F."/>
            <person name="Land M."/>
            <person name="Hauser L."/>
            <person name="Kyrpides N."/>
            <person name="Anderson I.J."/>
            <person name="Miller C."/>
            <person name="Richardson P."/>
        </authorList>
    </citation>
    <scope>NUCLEOTIDE SEQUENCE [LARGE SCALE GENOMIC DNA]</scope>
    <source>
        <strain>DSM 7251 / JCM 13017 / BCRC 16820 / KCTC 9966 / NRRL B-24157 / PYR-1</strain>
    </source>
</reference>
<sequence>MIRDVYLSDVTLRDGMHAVRHQYSIEQVAMIATALDRAGVDSIEVAHGDGLAGGTCNYGFGAHTDLEWIETVATAVKRARVATLVLPGVGTVRDLRDARRAGATVVRVGTHCTEADISAEHITAARELGMDTVGFLMMSHMSSPSALAAQAKLMEGYGATCVYVVDSGGAMVMRDVAERVDALRQTLLPATEIGIHAHHNLSLGVANSITAVQHGAHRVDASLAGMGAGAGNAPLEVFVAAAERLDWTHGCDLHALQDAADDLVRPLQDRPVRVDRETLTLGYAGVYSSFLRHAEAAAARYHIDARTLLEEAGRRGMVGGQEDMLVDIALDLTGADRS</sequence>